<gene>
    <name evidence="1" type="primary">fam83d-a</name>
</gene>
<protein>
    <recommendedName>
        <fullName evidence="3">Protein FAM83D-A</fullName>
    </recommendedName>
</protein>
<feature type="chain" id="PRO_0000365010" description="Protein FAM83D-A">
    <location>
        <begin position="1"/>
        <end position="562"/>
    </location>
</feature>
<feature type="region of interest" description="Disordered" evidence="2">
    <location>
        <begin position="424"/>
        <end position="471"/>
    </location>
</feature>
<feature type="compositionally biased region" description="Low complexity" evidence="2">
    <location>
        <begin position="425"/>
        <end position="471"/>
    </location>
</feature>
<proteinExistence type="evidence at transcript level"/>
<organism>
    <name type="scientific">Xenopus laevis</name>
    <name type="common">African clawed frog</name>
    <dbReference type="NCBI Taxonomy" id="8355"/>
    <lineage>
        <taxon>Eukaryota</taxon>
        <taxon>Metazoa</taxon>
        <taxon>Chordata</taxon>
        <taxon>Craniata</taxon>
        <taxon>Vertebrata</taxon>
        <taxon>Euteleostomi</taxon>
        <taxon>Amphibia</taxon>
        <taxon>Batrachia</taxon>
        <taxon>Anura</taxon>
        <taxon>Pipoidea</taxon>
        <taxon>Pipidae</taxon>
        <taxon>Xenopodinae</taxon>
        <taxon>Xenopus</taxon>
        <taxon>Xenopus</taxon>
    </lineage>
</organism>
<dbReference type="EMBL" id="BC084297">
    <property type="protein sequence ID" value="AAH84297.1"/>
    <property type="molecule type" value="mRNA"/>
</dbReference>
<dbReference type="SMR" id="Q5XGY0"/>
<dbReference type="AGR" id="Xenbase:XB-GENE-964366"/>
<dbReference type="Xenbase" id="XB-GENE-964366">
    <property type="gene designation" value="fam83d.L"/>
</dbReference>
<dbReference type="Proteomes" id="UP000186698">
    <property type="component" value="Unplaced"/>
</dbReference>
<dbReference type="GO" id="GO:0005737">
    <property type="term" value="C:cytoplasm"/>
    <property type="evidence" value="ECO:0000250"/>
    <property type="project" value="UniProtKB"/>
</dbReference>
<dbReference type="GO" id="GO:0005829">
    <property type="term" value="C:cytosol"/>
    <property type="evidence" value="ECO:0000318"/>
    <property type="project" value="GO_Central"/>
</dbReference>
<dbReference type="GO" id="GO:0097431">
    <property type="term" value="C:mitotic spindle pole"/>
    <property type="evidence" value="ECO:0000250"/>
    <property type="project" value="UniProtKB"/>
</dbReference>
<dbReference type="GO" id="GO:0019901">
    <property type="term" value="F:protein kinase binding"/>
    <property type="evidence" value="ECO:0000318"/>
    <property type="project" value="GO_Central"/>
</dbReference>
<dbReference type="GO" id="GO:0051301">
    <property type="term" value="P:cell division"/>
    <property type="evidence" value="ECO:0007669"/>
    <property type="project" value="UniProtKB-KW"/>
</dbReference>
<dbReference type="GO" id="GO:0008283">
    <property type="term" value="P:cell population proliferation"/>
    <property type="evidence" value="ECO:0000250"/>
    <property type="project" value="UniProtKB"/>
</dbReference>
<dbReference type="GO" id="GO:0051310">
    <property type="term" value="P:metaphase chromosome alignment"/>
    <property type="evidence" value="ECO:0000250"/>
    <property type="project" value="UniProtKB"/>
</dbReference>
<dbReference type="GO" id="GO:1902808">
    <property type="term" value="P:positive regulation of cell cycle G1/S phase transition"/>
    <property type="evidence" value="ECO:0000318"/>
    <property type="project" value="GO_Central"/>
</dbReference>
<dbReference type="GO" id="GO:1902480">
    <property type="term" value="P:protein localization to mitotic spindle"/>
    <property type="evidence" value="ECO:0000318"/>
    <property type="project" value="GO_Central"/>
</dbReference>
<dbReference type="GO" id="GO:0070372">
    <property type="term" value="P:regulation of ERK1 and ERK2 cascade"/>
    <property type="evidence" value="ECO:0000250"/>
    <property type="project" value="UniProtKB"/>
</dbReference>
<dbReference type="GO" id="GO:0032006">
    <property type="term" value="P:regulation of TOR signaling"/>
    <property type="evidence" value="ECO:0000318"/>
    <property type="project" value="GO_Central"/>
</dbReference>
<dbReference type="GO" id="GO:0007165">
    <property type="term" value="P:signal transduction"/>
    <property type="evidence" value="ECO:0000318"/>
    <property type="project" value="GO_Central"/>
</dbReference>
<dbReference type="CDD" id="cd09184">
    <property type="entry name" value="PLDc_FAM83D_N"/>
    <property type="match status" value="1"/>
</dbReference>
<dbReference type="FunFam" id="3.30.870.10:FF:000004">
    <property type="entry name" value="protein FAM83H isoform X2"/>
    <property type="match status" value="1"/>
</dbReference>
<dbReference type="Gene3D" id="3.30.870.10">
    <property type="entry name" value="Endonuclease Chain A"/>
    <property type="match status" value="1"/>
</dbReference>
<dbReference type="InterPro" id="IPR050944">
    <property type="entry name" value="FAM83"/>
</dbReference>
<dbReference type="InterPro" id="IPR012461">
    <property type="entry name" value="SACK1"/>
</dbReference>
<dbReference type="PANTHER" id="PTHR16181">
    <property type="entry name" value="PROTEIN FAM83A-RELATED"/>
    <property type="match status" value="1"/>
</dbReference>
<dbReference type="PANTHER" id="PTHR16181:SF29">
    <property type="entry name" value="PROTEIN FAM83A-RELATED"/>
    <property type="match status" value="1"/>
</dbReference>
<dbReference type="Pfam" id="PF07894">
    <property type="entry name" value="SACK1"/>
    <property type="match status" value="1"/>
</dbReference>
<dbReference type="SUPFAM" id="SSF56024">
    <property type="entry name" value="Phospholipase D/nuclease"/>
    <property type="match status" value="1"/>
</dbReference>
<name>F83DA_XENLA</name>
<accession>Q5XGY0</accession>
<reference key="1">
    <citation type="submission" date="2004-10" db="EMBL/GenBank/DDBJ databases">
        <authorList>
            <consortium name="NIH - Xenopus Gene Collection (XGC) project"/>
        </authorList>
    </citation>
    <scope>NUCLEOTIDE SEQUENCE [LARGE SCALE MRNA]</scope>
    <source>
        <tissue>Embryo</tissue>
    </source>
</reference>
<sequence length="562" mass="62433">MANASQCLDDVPMGGRWPAAPPDQYNEAHRLAMEELVSGGPEAMRGFLKRERLPSFLSEPEMGEILGCASVLPCGDEENSMSASVDCSSVTYFPDRSDVEPPILELGWPAFTTGSYRGVTRVDVHFQPSFGDTIYTCKEAARELIRSAREVIALVMDNFTDNDIFRDIHEACRKRRVPVYILLDQTQVSHFLTMCYNLGVSIETEPHMRVRLLTGNHYYTRSGTKIIGKVREKFLLVDGVKVATGNYSFTWTDGKLNSSNMLVLSGQVVEKFDLQFRILYAQSNPIGAKLLSSIRSRAMCLDKLPCKLPASKKPTLSSLLRMDQAKLSSTPKRHFDEFGAKFNRDVVALDKAAEDEWLQSCDIISGLKEMQTVEVQTEPWEGKNNVRGVDVGIQTSVAAANAATQTSVLSRMASTQTVMVSRSITTQTTETSQCTTQTPAPTSSVARLSNSSNSSSSSFSSTSITSTGSNCSMKSSDFSGTAFYQPEYPLGNCFKKLTKDRQYHYSTIRSKLNHMVSILSNRNRMPNSYMANDAPCYGLQRREIMHGSLLNLRDGVRFYPNM</sequence>
<evidence type="ECO:0000250" key="1">
    <source>
        <dbReference type="UniProtKB" id="Q9H4H8"/>
    </source>
</evidence>
<evidence type="ECO:0000256" key="2">
    <source>
        <dbReference type="SAM" id="MobiDB-lite"/>
    </source>
</evidence>
<evidence type="ECO:0000305" key="3"/>
<keyword id="KW-0131">Cell cycle</keyword>
<keyword id="KW-0132">Cell division</keyword>
<keyword id="KW-0963">Cytoplasm</keyword>
<keyword id="KW-0206">Cytoskeleton</keyword>
<keyword id="KW-0498">Mitosis</keyword>
<keyword id="KW-1185">Reference proteome</keyword>
<comment type="function">
    <text evidence="1">May regulate cell proliferation, growth, migration and epithelial to mesenchymal transition. May also be important for proper chromosome congression and alignment during mitosis.</text>
</comment>
<comment type="subcellular location">
    <subcellularLocation>
        <location evidence="1">Cytoplasm</location>
    </subcellularLocation>
    <subcellularLocation>
        <location evidence="1">Cytoplasm</location>
        <location evidence="1">Cytoskeleton</location>
        <location evidence="1">Spindle</location>
    </subcellularLocation>
    <subcellularLocation>
        <location evidence="1">Cytoplasm</location>
        <location evidence="1">Cytoskeleton</location>
        <location evidence="1">Spindle pole</location>
    </subcellularLocation>
</comment>
<comment type="similarity">
    <text evidence="3">Belongs to the FAM83 family.</text>
</comment>